<organism>
    <name type="scientific">Herpetosiphon aurantiacus (strain ATCC 23779 / DSM 785 / 114-95)</name>
    <dbReference type="NCBI Taxonomy" id="316274"/>
    <lineage>
        <taxon>Bacteria</taxon>
        <taxon>Bacillati</taxon>
        <taxon>Chloroflexota</taxon>
        <taxon>Chloroflexia</taxon>
        <taxon>Herpetosiphonales</taxon>
        <taxon>Herpetosiphonaceae</taxon>
        <taxon>Herpetosiphon</taxon>
    </lineage>
</organism>
<feature type="chain" id="PRO_1000118483" description="Methionyl-tRNA formyltransferase">
    <location>
        <begin position="1"/>
        <end position="306"/>
    </location>
</feature>
<feature type="binding site" evidence="1">
    <location>
        <begin position="109"/>
        <end position="112"/>
    </location>
    <ligand>
        <name>(6S)-5,6,7,8-tetrahydrofolate</name>
        <dbReference type="ChEBI" id="CHEBI:57453"/>
    </ligand>
</feature>
<evidence type="ECO:0000255" key="1">
    <source>
        <dbReference type="HAMAP-Rule" id="MF_00182"/>
    </source>
</evidence>
<comment type="function">
    <text evidence="1">Attaches a formyl group to the free amino group of methionyl-tRNA(fMet). The formyl group appears to play a dual role in the initiator identity of N-formylmethionyl-tRNA by promoting its recognition by IF2 and preventing the misappropriation of this tRNA by the elongation apparatus.</text>
</comment>
<comment type="catalytic activity">
    <reaction evidence="1">
        <text>L-methionyl-tRNA(fMet) + (6R)-10-formyltetrahydrofolate = N-formyl-L-methionyl-tRNA(fMet) + (6S)-5,6,7,8-tetrahydrofolate + H(+)</text>
        <dbReference type="Rhea" id="RHEA:24380"/>
        <dbReference type="Rhea" id="RHEA-COMP:9952"/>
        <dbReference type="Rhea" id="RHEA-COMP:9953"/>
        <dbReference type="ChEBI" id="CHEBI:15378"/>
        <dbReference type="ChEBI" id="CHEBI:57453"/>
        <dbReference type="ChEBI" id="CHEBI:78530"/>
        <dbReference type="ChEBI" id="CHEBI:78844"/>
        <dbReference type="ChEBI" id="CHEBI:195366"/>
        <dbReference type="EC" id="2.1.2.9"/>
    </reaction>
</comment>
<comment type="similarity">
    <text evidence="1">Belongs to the Fmt family.</text>
</comment>
<sequence length="306" mass="32837">MRILYLGTPEIAVAPLELLHASGHEIVGVVTQPDRPAGRKNVLTAPPVKLAAERLGIPVFQPETLKDPAAVARLRAFEPEVGVVAAYGEILRKQVLAIPALGYLNIHPSILPLYRGPAPVTGAILAGDDLVGVSIIKLTAKMDAGPILGQMVMPLANDARAGEWTAQLMRQGGELLAQVLPAYAAGQIQAQIQDDSQASYTQMISKNDGLINWNLPALVIERMTRAYDPWPGTAVKLNDQPFKILRAKAHTSWSGTIQPGTLFEQQGQILVATGSGALELLEVQPAGKRPMAANDWRRGAKDIEQL</sequence>
<gene>
    <name evidence="1" type="primary">fmt</name>
    <name type="ordered locus">Haur_4832</name>
</gene>
<dbReference type="EC" id="2.1.2.9" evidence="1"/>
<dbReference type="EMBL" id="CP000875">
    <property type="protein sequence ID" value="ABX07462.1"/>
    <property type="molecule type" value="Genomic_DNA"/>
</dbReference>
<dbReference type="SMR" id="A9B2Z9"/>
<dbReference type="FunCoup" id="A9B2Z9">
    <property type="interactions" value="474"/>
</dbReference>
<dbReference type="STRING" id="316274.Haur_4832"/>
<dbReference type="KEGG" id="hau:Haur_4832"/>
<dbReference type="eggNOG" id="COG0223">
    <property type="taxonomic scope" value="Bacteria"/>
</dbReference>
<dbReference type="HOGENOM" id="CLU_033347_2_0_0"/>
<dbReference type="InParanoid" id="A9B2Z9"/>
<dbReference type="Proteomes" id="UP000000787">
    <property type="component" value="Chromosome"/>
</dbReference>
<dbReference type="GO" id="GO:0005829">
    <property type="term" value="C:cytosol"/>
    <property type="evidence" value="ECO:0007669"/>
    <property type="project" value="TreeGrafter"/>
</dbReference>
<dbReference type="GO" id="GO:0004479">
    <property type="term" value="F:methionyl-tRNA formyltransferase activity"/>
    <property type="evidence" value="ECO:0007669"/>
    <property type="project" value="UniProtKB-UniRule"/>
</dbReference>
<dbReference type="CDD" id="cd08646">
    <property type="entry name" value="FMT_core_Met-tRNA-FMT_N"/>
    <property type="match status" value="1"/>
</dbReference>
<dbReference type="CDD" id="cd08704">
    <property type="entry name" value="Met_tRNA_FMT_C"/>
    <property type="match status" value="1"/>
</dbReference>
<dbReference type="Gene3D" id="3.10.25.10">
    <property type="entry name" value="Formyl transferase, C-terminal domain"/>
    <property type="match status" value="1"/>
</dbReference>
<dbReference type="Gene3D" id="3.40.50.170">
    <property type="entry name" value="Formyl transferase, N-terminal domain"/>
    <property type="match status" value="1"/>
</dbReference>
<dbReference type="HAMAP" id="MF_00182">
    <property type="entry name" value="Formyl_trans"/>
    <property type="match status" value="1"/>
</dbReference>
<dbReference type="InterPro" id="IPR005794">
    <property type="entry name" value="Fmt"/>
</dbReference>
<dbReference type="InterPro" id="IPR005793">
    <property type="entry name" value="Formyl_trans_C"/>
</dbReference>
<dbReference type="InterPro" id="IPR037022">
    <property type="entry name" value="Formyl_trans_C_sf"/>
</dbReference>
<dbReference type="InterPro" id="IPR002376">
    <property type="entry name" value="Formyl_transf_N"/>
</dbReference>
<dbReference type="InterPro" id="IPR036477">
    <property type="entry name" value="Formyl_transf_N_sf"/>
</dbReference>
<dbReference type="InterPro" id="IPR011034">
    <property type="entry name" value="Formyl_transferase-like_C_sf"/>
</dbReference>
<dbReference type="InterPro" id="IPR044135">
    <property type="entry name" value="Met-tRNA-FMT_C"/>
</dbReference>
<dbReference type="InterPro" id="IPR041711">
    <property type="entry name" value="Met-tRNA-FMT_N"/>
</dbReference>
<dbReference type="NCBIfam" id="TIGR00460">
    <property type="entry name" value="fmt"/>
    <property type="match status" value="1"/>
</dbReference>
<dbReference type="PANTHER" id="PTHR11138">
    <property type="entry name" value="METHIONYL-TRNA FORMYLTRANSFERASE"/>
    <property type="match status" value="1"/>
</dbReference>
<dbReference type="PANTHER" id="PTHR11138:SF5">
    <property type="entry name" value="METHIONYL-TRNA FORMYLTRANSFERASE, MITOCHONDRIAL"/>
    <property type="match status" value="1"/>
</dbReference>
<dbReference type="Pfam" id="PF02911">
    <property type="entry name" value="Formyl_trans_C"/>
    <property type="match status" value="1"/>
</dbReference>
<dbReference type="Pfam" id="PF00551">
    <property type="entry name" value="Formyl_trans_N"/>
    <property type="match status" value="1"/>
</dbReference>
<dbReference type="SUPFAM" id="SSF50486">
    <property type="entry name" value="FMT C-terminal domain-like"/>
    <property type="match status" value="1"/>
</dbReference>
<dbReference type="SUPFAM" id="SSF53328">
    <property type="entry name" value="Formyltransferase"/>
    <property type="match status" value="1"/>
</dbReference>
<name>FMT_HERA2</name>
<accession>A9B2Z9</accession>
<proteinExistence type="inferred from homology"/>
<keyword id="KW-0648">Protein biosynthesis</keyword>
<keyword id="KW-0808">Transferase</keyword>
<protein>
    <recommendedName>
        <fullName evidence="1">Methionyl-tRNA formyltransferase</fullName>
        <ecNumber evidence="1">2.1.2.9</ecNumber>
    </recommendedName>
</protein>
<reference key="1">
    <citation type="journal article" date="2011" name="Stand. Genomic Sci.">
        <title>Complete genome sequence of the filamentous gliding predatory bacterium Herpetosiphon aurantiacus type strain (114-95(T)).</title>
        <authorList>
            <person name="Kiss H."/>
            <person name="Nett M."/>
            <person name="Domin N."/>
            <person name="Martin K."/>
            <person name="Maresca J.A."/>
            <person name="Copeland A."/>
            <person name="Lapidus A."/>
            <person name="Lucas S."/>
            <person name="Berry K.W."/>
            <person name="Glavina Del Rio T."/>
            <person name="Dalin E."/>
            <person name="Tice H."/>
            <person name="Pitluck S."/>
            <person name="Richardson P."/>
            <person name="Bruce D."/>
            <person name="Goodwin L."/>
            <person name="Han C."/>
            <person name="Detter J.C."/>
            <person name="Schmutz J."/>
            <person name="Brettin T."/>
            <person name="Land M."/>
            <person name="Hauser L."/>
            <person name="Kyrpides N.C."/>
            <person name="Ivanova N."/>
            <person name="Goeker M."/>
            <person name="Woyke T."/>
            <person name="Klenk H.P."/>
            <person name="Bryant D.A."/>
        </authorList>
    </citation>
    <scope>NUCLEOTIDE SEQUENCE [LARGE SCALE GENOMIC DNA]</scope>
    <source>
        <strain>ATCC 23779 / DSM 785 / 114-95</strain>
    </source>
</reference>